<keyword id="KW-0002">3D-structure</keyword>
<keyword id="KW-0119">Carbohydrate metabolism</keyword>
<keyword id="KW-0963">Cytoplasm</keyword>
<keyword id="KW-0294">Fucose metabolism</keyword>
<keyword id="KW-0413">Isomerase</keyword>
<keyword id="KW-0464">Manganese</keyword>
<keyword id="KW-0479">Metal-binding</keyword>
<keyword id="KW-1185">Reference proteome</keyword>
<dbReference type="EC" id="5.3.1.25" evidence="1"/>
<dbReference type="EMBL" id="AE005672">
    <property type="protein sequence ID" value="AAK76212.1"/>
    <property type="molecule type" value="Genomic_DNA"/>
</dbReference>
<dbReference type="PIR" id="C95252">
    <property type="entry name" value="C95252"/>
</dbReference>
<dbReference type="RefSeq" id="WP_000614266.1">
    <property type="nucleotide sequence ID" value="NC_003028.3"/>
</dbReference>
<dbReference type="PDB" id="4C20">
    <property type="method" value="X-ray"/>
    <property type="resolution" value="2.41 A"/>
    <property type="chains" value="A/B=2-588"/>
</dbReference>
<dbReference type="PDB" id="4C21">
    <property type="method" value="X-ray"/>
    <property type="resolution" value="2.55 A"/>
    <property type="chains" value="A/B=1-588"/>
</dbReference>
<dbReference type="PDB" id="4C22">
    <property type="method" value="X-ray"/>
    <property type="resolution" value="2.70 A"/>
    <property type="chains" value="A/B=2-588"/>
</dbReference>
<dbReference type="PDBsum" id="4C20"/>
<dbReference type="PDBsum" id="4C21"/>
<dbReference type="PDBsum" id="4C22"/>
<dbReference type="SMR" id="Q97N97"/>
<dbReference type="PaxDb" id="170187-SP_2158"/>
<dbReference type="EnsemblBacteria" id="AAK76212">
    <property type="protein sequence ID" value="AAK76212"/>
    <property type="gene ID" value="SP_2158"/>
</dbReference>
<dbReference type="KEGG" id="spn:SP_2158"/>
<dbReference type="eggNOG" id="COG2407">
    <property type="taxonomic scope" value="Bacteria"/>
</dbReference>
<dbReference type="PhylomeDB" id="Q97N97"/>
<dbReference type="BioCyc" id="SPNE170187:G1FZB-2252-MONOMER"/>
<dbReference type="UniPathway" id="UPA00563">
    <property type="reaction ID" value="UER00624"/>
</dbReference>
<dbReference type="EvolutionaryTrace" id="Q97N97"/>
<dbReference type="Proteomes" id="UP000000585">
    <property type="component" value="Chromosome"/>
</dbReference>
<dbReference type="GO" id="GO:0005737">
    <property type="term" value="C:cytoplasm"/>
    <property type="evidence" value="ECO:0007669"/>
    <property type="project" value="UniProtKB-SubCell"/>
</dbReference>
<dbReference type="GO" id="GO:0008790">
    <property type="term" value="F:arabinose isomerase activity"/>
    <property type="evidence" value="ECO:0007669"/>
    <property type="project" value="TreeGrafter"/>
</dbReference>
<dbReference type="GO" id="GO:0008736">
    <property type="term" value="F:L-fucose isomerase activity"/>
    <property type="evidence" value="ECO:0007669"/>
    <property type="project" value="UniProtKB-UniRule"/>
</dbReference>
<dbReference type="GO" id="GO:0030145">
    <property type="term" value="F:manganese ion binding"/>
    <property type="evidence" value="ECO:0007669"/>
    <property type="project" value="UniProtKB-UniRule"/>
</dbReference>
<dbReference type="GO" id="GO:0019571">
    <property type="term" value="P:D-arabinose catabolic process"/>
    <property type="evidence" value="ECO:0007669"/>
    <property type="project" value="TreeGrafter"/>
</dbReference>
<dbReference type="GO" id="GO:0042355">
    <property type="term" value="P:L-fucose catabolic process"/>
    <property type="evidence" value="ECO:0007669"/>
    <property type="project" value="UniProtKB-UniRule"/>
</dbReference>
<dbReference type="CDD" id="cd03556">
    <property type="entry name" value="L-fucose_isomerase"/>
    <property type="match status" value="1"/>
</dbReference>
<dbReference type="FunFam" id="3.20.14.10:FF:000001">
    <property type="entry name" value="L-fucose isomerase"/>
    <property type="match status" value="1"/>
</dbReference>
<dbReference type="FunFam" id="3.40.50.1070:FF:000001">
    <property type="entry name" value="L-fucose isomerase"/>
    <property type="match status" value="1"/>
</dbReference>
<dbReference type="Gene3D" id="3.40.50.1070">
    <property type="match status" value="1"/>
</dbReference>
<dbReference type="Gene3D" id="3.40.275.10">
    <property type="entry name" value="L-fucose Isomerase, Chain A, domain 2"/>
    <property type="match status" value="1"/>
</dbReference>
<dbReference type="Gene3D" id="3.20.14.10">
    <property type="entry name" value="L-fucose/L-arabinose isomerase, C-terminal"/>
    <property type="match status" value="1"/>
</dbReference>
<dbReference type="HAMAP" id="MF_01254">
    <property type="entry name" value="Fucose_iso"/>
    <property type="match status" value="1"/>
</dbReference>
<dbReference type="InterPro" id="IPR004216">
    <property type="entry name" value="Fuc/Ara_isomerase_C"/>
</dbReference>
<dbReference type="InterPro" id="IPR038393">
    <property type="entry name" value="Fuc_iso_dom3_sf"/>
</dbReference>
<dbReference type="InterPro" id="IPR015888">
    <property type="entry name" value="Fuc_isomerase_C"/>
</dbReference>
<dbReference type="InterPro" id="IPR038391">
    <property type="entry name" value="Fucose_iso_dom1_sf"/>
</dbReference>
<dbReference type="InterPro" id="IPR012888">
    <property type="entry name" value="Fucose_iso_N1"/>
</dbReference>
<dbReference type="InterPro" id="IPR005763">
    <property type="entry name" value="Fucose_isomerase"/>
</dbReference>
<dbReference type="InterPro" id="IPR038392">
    <property type="entry name" value="Fucose_isomerase_dom2_sf"/>
</dbReference>
<dbReference type="InterPro" id="IPR009015">
    <property type="entry name" value="Fucose_isomerase_N/cen_sf"/>
</dbReference>
<dbReference type="InterPro" id="IPR012889">
    <property type="entry name" value="Fucose_isomerase_N2"/>
</dbReference>
<dbReference type="NCBIfam" id="TIGR01089">
    <property type="entry name" value="fucI"/>
    <property type="match status" value="1"/>
</dbReference>
<dbReference type="NCBIfam" id="NF008220">
    <property type="entry name" value="PRK10991.1"/>
    <property type="match status" value="1"/>
</dbReference>
<dbReference type="PANTHER" id="PTHR37840">
    <property type="entry name" value="L-FUCOSE ISOMERASE"/>
    <property type="match status" value="1"/>
</dbReference>
<dbReference type="PANTHER" id="PTHR37840:SF1">
    <property type="entry name" value="L-FUCOSE ISOMERASE"/>
    <property type="match status" value="1"/>
</dbReference>
<dbReference type="Pfam" id="PF02952">
    <property type="entry name" value="Fucose_iso_C"/>
    <property type="match status" value="1"/>
</dbReference>
<dbReference type="Pfam" id="PF07881">
    <property type="entry name" value="Fucose_iso_N1"/>
    <property type="match status" value="1"/>
</dbReference>
<dbReference type="Pfam" id="PF07882">
    <property type="entry name" value="Fucose_iso_N2"/>
    <property type="match status" value="1"/>
</dbReference>
<dbReference type="SUPFAM" id="SSF50443">
    <property type="entry name" value="FucI/AraA C-terminal domain-like"/>
    <property type="match status" value="1"/>
</dbReference>
<dbReference type="SUPFAM" id="SSF53743">
    <property type="entry name" value="FucI/AraA N-terminal and middle domains"/>
    <property type="match status" value="1"/>
</dbReference>
<accession>Q97N97</accession>
<gene>
    <name evidence="1" type="primary">fucI</name>
    <name type="ordered locus">SP_2158</name>
</gene>
<sequence length="588" mass="65895">MIQHPRIGIRPTIDGRRQGVRESLEVQTMNMAKSVADLISSTLKYPDGEPVECVISPSTIGRVPEAAASHELFKKSNVCATITVTPCWCYGSETMDMSPDIPHAIWGFNGTERPGAVYLAAVLASHAQKGIPAFGIYGRDVQEASDTDIPEDVKEKLLRYARAALATGLMRDTAYLSMGSVSMGIGGSIVNPDFFQEYLGMRNESVDMTEFTRRMDRGIYDPEEFERALKWVKENVKEGFDHNREDLVLSREEKDRQWEFVIKMFMIGRDLMVGNPRLAELGFEEEAVGHHALVAGFQGQRQWTDHFPNGDFMETFLNTQFDWNGIRKPFVFATENDSLNGVSMLFNYLLTNTPQIFADVRTYWSPEAVKRVTGHTLEGRAAAGFLHLINSGSCTLDGTGQATRDGKPIMKPFWELEESEVQAMLENTDFPPANREYFRGGGFSTRFLTKGDMPVTMVRLNLLKGVGPVLQIAEGYTLELPEDVHHTLDNRTDPGWPTTWFAPRLTGKGAFKSVYDVMNNWGANHGAITYGHIGADLITLASMLRIPVNMHNVPEEDIFRPKNWSLFGTEDLESADYRACQLLGPLHK</sequence>
<proteinExistence type="evidence at protein level"/>
<feature type="chain" id="PRO_0000204152" description="L-fucose isomerase">
    <location>
        <begin position="1"/>
        <end position="588"/>
    </location>
</feature>
<feature type="active site" description="Proton acceptor" evidence="1">
    <location>
        <position position="335"/>
    </location>
</feature>
<feature type="active site" description="Proton acceptor" evidence="1">
    <location>
        <position position="359"/>
    </location>
</feature>
<feature type="binding site" evidence="1">
    <location>
        <position position="335"/>
    </location>
    <ligand>
        <name>Mn(2+)</name>
        <dbReference type="ChEBI" id="CHEBI:29035"/>
    </ligand>
</feature>
<feature type="binding site" evidence="1">
    <location>
        <position position="359"/>
    </location>
    <ligand>
        <name>Mn(2+)</name>
        <dbReference type="ChEBI" id="CHEBI:29035"/>
    </ligand>
</feature>
<feature type="binding site" evidence="1">
    <location>
        <position position="525"/>
    </location>
    <ligand>
        <name>Mn(2+)</name>
        <dbReference type="ChEBI" id="CHEBI:29035"/>
    </ligand>
</feature>
<feature type="strand" evidence="2">
    <location>
        <begin position="6"/>
        <end position="12"/>
    </location>
</feature>
<feature type="turn" evidence="2">
    <location>
        <begin position="17"/>
        <end position="19"/>
    </location>
</feature>
<feature type="helix" evidence="2">
    <location>
        <begin position="20"/>
        <end position="42"/>
    </location>
</feature>
<feature type="strand" evidence="2">
    <location>
        <begin position="53"/>
        <end position="55"/>
    </location>
</feature>
<feature type="strand" evidence="2">
    <location>
        <begin position="60"/>
        <end position="62"/>
    </location>
</feature>
<feature type="helix" evidence="2">
    <location>
        <begin position="63"/>
        <end position="74"/>
    </location>
</feature>
<feature type="turn" evidence="2">
    <location>
        <begin position="75"/>
        <end position="77"/>
    </location>
</feature>
<feature type="strand" evidence="2">
    <location>
        <begin position="78"/>
        <end position="87"/>
    </location>
</feature>
<feature type="helix" evidence="2">
    <location>
        <begin position="91"/>
        <end position="94"/>
    </location>
</feature>
<feature type="strand" evidence="2">
    <location>
        <begin position="99"/>
        <end position="101"/>
    </location>
</feature>
<feature type="strand" evidence="2">
    <location>
        <begin position="103"/>
        <end position="107"/>
    </location>
</feature>
<feature type="strand" evidence="2">
    <location>
        <begin position="111"/>
        <end position="113"/>
    </location>
</feature>
<feature type="helix" evidence="2">
    <location>
        <begin position="115"/>
        <end position="129"/>
    </location>
</feature>
<feature type="strand" evidence="2">
    <location>
        <begin position="134"/>
        <end position="136"/>
    </location>
</feature>
<feature type="helix" evidence="2">
    <location>
        <begin position="151"/>
        <end position="170"/>
    </location>
</feature>
<feature type="strand" evidence="2">
    <location>
        <begin position="174"/>
        <end position="180"/>
    </location>
</feature>
<feature type="helix" evidence="2">
    <location>
        <begin position="186"/>
        <end position="188"/>
    </location>
</feature>
<feature type="helix" evidence="2">
    <location>
        <begin position="192"/>
        <end position="199"/>
    </location>
</feature>
<feature type="strand" evidence="2">
    <location>
        <begin position="202"/>
        <end position="206"/>
    </location>
</feature>
<feature type="helix" evidence="2">
    <location>
        <begin position="209"/>
        <end position="216"/>
    </location>
</feature>
<feature type="helix" evidence="2">
    <location>
        <begin position="222"/>
        <end position="235"/>
    </location>
</feature>
<feature type="helix" evidence="2">
    <location>
        <begin position="245"/>
        <end position="247"/>
    </location>
</feature>
<feature type="helix" evidence="2">
    <location>
        <begin position="251"/>
        <end position="273"/>
    </location>
</feature>
<feature type="helix" evidence="2">
    <location>
        <begin position="276"/>
        <end position="280"/>
    </location>
</feature>
<feature type="helix" evidence="2">
    <location>
        <begin position="286"/>
        <end position="288"/>
    </location>
</feature>
<feature type="strand" evidence="2">
    <location>
        <begin position="292"/>
        <end position="297"/>
    </location>
</feature>
<feature type="turn" evidence="2">
    <location>
        <begin position="300"/>
        <end position="306"/>
    </location>
</feature>
<feature type="helix" evidence="2">
    <location>
        <begin position="311"/>
        <end position="318"/>
    </location>
</feature>
<feature type="strand" evidence="2">
    <location>
        <begin position="319"/>
        <end position="322"/>
    </location>
</feature>
<feature type="strand" evidence="2">
    <location>
        <begin position="331"/>
        <end position="334"/>
    </location>
</feature>
<feature type="helix" evidence="2">
    <location>
        <begin position="338"/>
        <end position="351"/>
    </location>
</feature>
<feature type="strand" evidence="2">
    <location>
        <begin position="356"/>
        <end position="364"/>
    </location>
</feature>
<feature type="helix" evidence="2">
    <location>
        <begin position="366"/>
        <end position="373"/>
    </location>
</feature>
<feature type="helix" evidence="2">
    <location>
        <begin position="379"/>
        <end position="381"/>
    </location>
</feature>
<feature type="strand" evidence="2">
    <location>
        <begin position="385"/>
        <end position="388"/>
    </location>
</feature>
<feature type="helix" evidence="2">
    <location>
        <begin position="396"/>
        <end position="399"/>
    </location>
</feature>
<feature type="strand" evidence="2">
    <location>
        <begin position="402"/>
        <end position="404"/>
    </location>
</feature>
<feature type="strand" evidence="2">
    <location>
        <begin position="407"/>
        <end position="409"/>
    </location>
</feature>
<feature type="helix" evidence="2">
    <location>
        <begin position="413"/>
        <end position="415"/>
    </location>
</feature>
<feature type="helix" evidence="2">
    <location>
        <begin position="418"/>
        <end position="426"/>
    </location>
</feature>
<feature type="turn" evidence="2">
    <location>
        <begin position="435"/>
        <end position="437"/>
    </location>
</feature>
<feature type="strand" evidence="2">
    <location>
        <begin position="454"/>
        <end position="463"/>
    </location>
</feature>
<feature type="turn" evidence="2">
    <location>
        <begin position="464"/>
        <end position="466"/>
    </location>
</feature>
<feature type="strand" evidence="2">
    <location>
        <begin position="467"/>
        <end position="477"/>
    </location>
</feature>
<feature type="helix" evidence="2">
    <location>
        <begin position="482"/>
        <end position="490"/>
    </location>
</feature>
<feature type="strand" evidence="2">
    <location>
        <begin position="498"/>
        <end position="503"/>
    </location>
</feature>
<feature type="helix" evidence="2">
    <location>
        <begin position="514"/>
        <end position="519"/>
    </location>
</feature>
<feature type="strand" evidence="2">
    <location>
        <begin position="523"/>
        <end position="531"/>
    </location>
</feature>
<feature type="helix" evidence="2">
    <location>
        <begin position="534"/>
        <end position="544"/>
    </location>
</feature>
<feature type="strand" evidence="2">
    <location>
        <begin position="548"/>
        <end position="550"/>
    </location>
</feature>
<feature type="helix" evidence="2">
    <location>
        <begin position="555"/>
        <end position="557"/>
    </location>
</feature>
<feature type="helix" evidence="2">
    <location>
        <begin position="562"/>
        <end position="567"/>
    </location>
</feature>
<feature type="helix" evidence="2">
    <location>
        <begin position="572"/>
        <end position="583"/>
    </location>
</feature>
<protein>
    <recommendedName>
        <fullName evidence="1">L-fucose isomerase</fullName>
        <ecNumber evidence="1">5.3.1.25</ecNumber>
    </recommendedName>
    <alternativeName>
        <fullName evidence="1">6-deoxy-L-galactose isomerase</fullName>
    </alternativeName>
    <alternativeName>
        <fullName>FucIase</fullName>
    </alternativeName>
</protein>
<name>FUCI_STRPN</name>
<organism>
    <name type="scientific">Streptococcus pneumoniae serotype 4 (strain ATCC BAA-334 / TIGR4)</name>
    <dbReference type="NCBI Taxonomy" id="170187"/>
    <lineage>
        <taxon>Bacteria</taxon>
        <taxon>Bacillati</taxon>
        <taxon>Bacillota</taxon>
        <taxon>Bacilli</taxon>
        <taxon>Lactobacillales</taxon>
        <taxon>Streptococcaceae</taxon>
        <taxon>Streptococcus</taxon>
    </lineage>
</organism>
<comment type="function">
    <text evidence="1">Converts the aldose L-fucose into the corresponding ketose L-fuculose.</text>
</comment>
<comment type="catalytic activity">
    <reaction evidence="1">
        <text>L-fucose = L-fuculose</text>
        <dbReference type="Rhea" id="RHEA:17233"/>
        <dbReference type="ChEBI" id="CHEBI:2181"/>
        <dbReference type="ChEBI" id="CHEBI:17617"/>
        <dbReference type="EC" id="5.3.1.25"/>
    </reaction>
</comment>
<comment type="cofactor">
    <cofactor evidence="1">
        <name>Mn(2+)</name>
        <dbReference type="ChEBI" id="CHEBI:29035"/>
    </cofactor>
</comment>
<comment type="pathway">
    <text evidence="1">Carbohydrate degradation; L-fucose degradation; L-lactaldehyde and glycerone phosphate from L-fucose: step 1/3.</text>
</comment>
<comment type="subcellular location">
    <subcellularLocation>
        <location evidence="1">Cytoplasm</location>
    </subcellularLocation>
</comment>
<comment type="similarity">
    <text evidence="1">Belongs to the L-fucose isomerase family.</text>
</comment>
<reference key="1">
    <citation type="journal article" date="2001" name="Science">
        <title>Complete genome sequence of a virulent isolate of Streptococcus pneumoniae.</title>
        <authorList>
            <person name="Tettelin H."/>
            <person name="Nelson K.E."/>
            <person name="Paulsen I.T."/>
            <person name="Eisen J.A."/>
            <person name="Read T.D."/>
            <person name="Peterson S.N."/>
            <person name="Heidelberg J.F."/>
            <person name="DeBoy R.T."/>
            <person name="Haft D.H."/>
            <person name="Dodson R.J."/>
            <person name="Durkin A.S."/>
            <person name="Gwinn M.L."/>
            <person name="Kolonay J.F."/>
            <person name="Nelson W.C."/>
            <person name="Peterson J.D."/>
            <person name="Umayam L.A."/>
            <person name="White O."/>
            <person name="Salzberg S.L."/>
            <person name="Lewis M.R."/>
            <person name="Radune D."/>
            <person name="Holtzapple E.K."/>
            <person name="Khouri H.M."/>
            <person name="Wolf A.M."/>
            <person name="Utterback T.R."/>
            <person name="Hansen C.L."/>
            <person name="McDonald L.A."/>
            <person name="Feldblyum T.V."/>
            <person name="Angiuoli S.V."/>
            <person name="Dickinson T."/>
            <person name="Hickey E.K."/>
            <person name="Holt I.E."/>
            <person name="Loftus B.J."/>
            <person name="Yang F."/>
            <person name="Smith H.O."/>
            <person name="Venter J.C."/>
            <person name="Dougherty B.A."/>
            <person name="Morrison D.A."/>
            <person name="Hollingshead S.K."/>
            <person name="Fraser C.M."/>
        </authorList>
    </citation>
    <scope>NUCLEOTIDE SEQUENCE [LARGE SCALE GENOMIC DNA]</scope>
    <source>
        <strain>ATCC BAA-334 / TIGR4</strain>
    </source>
</reference>
<evidence type="ECO:0000255" key="1">
    <source>
        <dbReference type="HAMAP-Rule" id="MF_01254"/>
    </source>
</evidence>
<evidence type="ECO:0007829" key="2">
    <source>
        <dbReference type="PDB" id="4C20"/>
    </source>
</evidence>